<feature type="chain" id="PRO_0000314039" description="Serine/threonine-protein kinase Nek3">
    <location>
        <begin position="1"/>
        <end position="568"/>
    </location>
</feature>
<feature type="domain" description="Protein kinase" evidence="1">
    <location>
        <begin position="4"/>
        <end position="258"/>
    </location>
</feature>
<feature type="region of interest" description="Disordered" evidence="3">
    <location>
        <begin position="277"/>
        <end position="312"/>
    </location>
</feature>
<feature type="region of interest" description="Disordered" evidence="3">
    <location>
        <begin position="440"/>
        <end position="505"/>
    </location>
</feature>
<feature type="compositionally biased region" description="Basic and acidic residues" evidence="3">
    <location>
        <begin position="461"/>
        <end position="478"/>
    </location>
</feature>
<feature type="compositionally biased region" description="Low complexity" evidence="3">
    <location>
        <begin position="483"/>
        <end position="496"/>
    </location>
</feature>
<feature type="active site" description="Proton acceptor" evidence="1 2">
    <location>
        <position position="129"/>
    </location>
</feature>
<feature type="binding site" evidence="1">
    <location>
        <begin position="10"/>
        <end position="18"/>
    </location>
    <ligand>
        <name>ATP</name>
        <dbReference type="ChEBI" id="CHEBI:30616"/>
    </ligand>
</feature>
<feature type="binding site" evidence="1">
    <location>
        <position position="33"/>
    </location>
    <ligand>
        <name>ATP</name>
        <dbReference type="ChEBI" id="CHEBI:30616"/>
    </ligand>
</feature>
<accession>Q8RX66</accession>
<gene>
    <name type="primary">NEK3</name>
    <name type="ordered locus">At5g28290</name>
    <name type="ORF">T8M17.60</name>
</gene>
<keyword id="KW-0067">ATP-binding</keyword>
<keyword id="KW-0418">Kinase</keyword>
<keyword id="KW-0547">Nucleotide-binding</keyword>
<keyword id="KW-1185">Reference proteome</keyword>
<keyword id="KW-0723">Serine/threonine-protein kinase</keyword>
<keyword id="KW-0808">Transferase</keyword>
<organism>
    <name type="scientific">Arabidopsis thaliana</name>
    <name type="common">Mouse-ear cress</name>
    <dbReference type="NCBI Taxonomy" id="3702"/>
    <lineage>
        <taxon>Eukaryota</taxon>
        <taxon>Viridiplantae</taxon>
        <taxon>Streptophyta</taxon>
        <taxon>Embryophyta</taxon>
        <taxon>Tracheophyta</taxon>
        <taxon>Spermatophyta</taxon>
        <taxon>Magnoliopsida</taxon>
        <taxon>eudicotyledons</taxon>
        <taxon>Gunneridae</taxon>
        <taxon>Pentapetalae</taxon>
        <taxon>rosids</taxon>
        <taxon>malvids</taxon>
        <taxon>Brassicales</taxon>
        <taxon>Brassicaceae</taxon>
        <taxon>Camelineae</taxon>
        <taxon>Arabidopsis</taxon>
    </lineage>
</organism>
<reference key="1">
    <citation type="journal article" date="2000" name="Nature">
        <title>Sequence and analysis of chromosome 5 of the plant Arabidopsis thaliana.</title>
        <authorList>
            <person name="Tabata S."/>
            <person name="Kaneko T."/>
            <person name="Nakamura Y."/>
            <person name="Kotani H."/>
            <person name="Kato T."/>
            <person name="Asamizu E."/>
            <person name="Miyajima N."/>
            <person name="Sasamoto S."/>
            <person name="Kimura T."/>
            <person name="Hosouchi T."/>
            <person name="Kawashima K."/>
            <person name="Kohara M."/>
            <person name="Matsumoto M."/>
            <person name="Matsuno A."/>
            <person name="Muraki A."/>
            <person name="Nakayama S."/>
            <person name="Nakazaki N."/>
            <person name="Naruo K."/>
            <person name="Okumura S."/>
            <person name="Shinpo S."/>
            <person name="Takeuchi C."/>
            <person name="Wada T."/>
            <person name="Watanabe A."/>
            <person name="Yamada M."/>
            <person name="Yasuda M."/>
            <person name="Sato S."/>
            <person name="de la Bastide M."/>
            <person name="Huang E."/>
            <person name="Spiegel L."/>
            <person name="Gnoj L."/>
            <person name="O'Shaughnessy A."/>
            <person name="Preston R."/>
            <person name="Habermann K."/>
            <person name="Murray J."/>
            <person name="Johnson D."/>
            <person name="Rohlfing T."/>
            <person name="Nelson J."/>
            <person name="Stoneking T."/>
            <person name="Pepin K."/>
            <person name="Spieth J."/>
            <person name="Sekhon M."/>
            <person name="Armstrong J."/>
            <person name="Becker M."/>
            <person name="Belter E."/>
            <person name="Cordum H."/>
            <person name="Cordes M."/>
            <person name="Courtney L."/>
            <person name="Courtney W."/>
            <person name="Dante M."/>
            <person name="Du H."/>
            <person name="Edwards J."/>
            <person name="Fryman J."/>
            <person name="Haakensen B."/>
            <person name="Lamar E."/>
            <person name="Latreille P."/>
            <person name="Leonard S."/>
            <person name="Meyer R."/>
            <person name="Mulvaney E."/>
            <person name="Ozersky P."/>
            <person name="Riley A."/>
            <person name="Strowmatt C."/>
            <person name="Wagner-McPherson C."/>
            <person name="Wollam A."/>
            <person name="Yoakum M."/>
            <person name="Bell M."/>
            <person name="Dedhia N."/>
            <person name="Parnell L."/>
            <person name="Shah R."/>
            <person name="Rodriguez M."/>
            <person name="Hoon See L."/>
            <person name="Vil D."/>
            <person name="Baker J."/>
            <person name="Kirchoff K."/>
            <person name="Toth K."/>
            <person name="King L."/>
            <person name="Bahret A."/>
            <person name="Miller B."/>
            <person name="Marra M.A."/>
            <person name="Martienssen R."/>
            <person name="McCombie W.R."/>
            <person name="Wilson R.K."/>
            <person name="Murphy G."/>
            <person name="Bancroft I."/>
            <person name="Volckaert G."/>
            <person name="Wambutt R."/>
            <person name="Duesterhoeft A."/>
            <person name="Stiekema W."/>
            <person name="Pohl T."/>
            <person name="Entian K.-D."/>
            <person name="Terryn N."/>
            <person name="Hartley N."/>
            <person name="Bent E."/>
            <person name="Johnson S."/>
            <person name="Langham S.-A."/>
            <person name="McCullagh B."/>
            <person name="Robben J."/>
            <person name="Grymonprez B."/>
            <person name="Zimmermann W."/>
            <person name="Ramsperger U."/>
            <person name="Wedler H."/>
            <person name="Balke K."/>
            <person name="Wedler E."/>
            <person name="Peters S."/>
            <person name="van Staveren M."/>
            <person name="Dirkse W."/>
            <person name="Mooijman P."/>
            <person name="Klein Lankhorst R."/>
            <person name="Weitzenegger T."/>
            <person name="Bothe G."/>
            <person name="Rose M."/>
            <person name="Hauf J."/>
            <person name="Berneiser S."/>
            <person name="Hempel S."/>
            <person name="Feldpausch M."/>
            <person name="Lamberth S."/>
            <person name="Villarroel R."/>
            <person name="Gielen J."/>
            <person name="Ardiles W."/>
            <person name="Bents O."/>
            <person name="Lemcke K."/>
            <person name="Kolesov G."/>
            <person name="Mayer K.F.X."/>
            <person name="Rudd S."/>
            <person name="Schoof H."/>
            <person name="Schueller C."/>
            <person name="Zaccaria P."/>
            <person name="Mewes H.-W."/>
            <person name="Bevan M."/>
            <person name="Fransz P.F."/>
        </authorList>
    </citation>
    <scope>NUCLEOTIDE SEQUENCE [LARGE SCALE GENOMIC DNA]</scope>
    <source>
        <strain>cv. Columbia</strain>
    </source>
</reference>
<reference key="2">
    <citation type="journal article" date="2017" name="Plant J.">
        <title>Araport11: a complete reannotation of the Arabidopsis thaliana reference genome.</title>
        <authorList>
            <person name="Cheng C.Y."/>
            <person name="Krishnakumar V."/>
            <person name="Chan A.P."/>
            <person name="Thibaud-Nissen F."/>
            <person name="Schobel S."/>
            <person name="Town C.D."/>
        </authorList>
    </citation>
    <scope>GENOME REANNOTATION</scope>
    <source>
        <strain>cv. Columbia</strain>
    </source>
</reference>
<reference key="3">
    <citation type="journal article" date="2003" name="Science">
        <title>Empirical analysis of transcriptional activity in the Arabidopsis genome.</title>
        <authorList>
            <person name="Yamada K."/>
            <person name="Lim J."/>
            <person name="Dale J.M."/>
            <person name="Chen H."/>
            <person name="Shinn P."/>
            <person name="Palm C.J."/>
            <person name="Southwick A.M."/>
            <person name="Wu H.C."/>
            <person name="Kim C.J."/>
            <person name="Nguyen M."/>
            <person name="Pham P.K."/>
            <person name="Cheuk R.F."/>
            <person name="Karlin-Newmann G."/>
            <person name="Liu S.X."/>
            <person name="Lam B."/>
            <person name="Sakano H."/>
            <person name="Wu T."/>
            <person name="Yu G."/>
            <person name="Miranda M."/>
            <person name="Quach H.L."/>
            <person name="Tripp M."/>
            <person name="Chang C.H."/>
            <person name="Lee J.M."/>
            <person name="Toriumi M.J."/>
            <person name="Chan M.M."/>
            <person name="Tang C.C."/>
            <person name="Onodera C.S."/>
            <person name="Deng J.M."/>
            <person name="Akiyama K."/>
            <person name="Ansari Y."/>
            <person name="Arakawa T."/>
            <person name="Banh J."/>
            <person name="Banno F."/>
            <person name="Bowser L."/>
            <person name="Brooks S.Y."/>
            <person name="Carninci P."/>
            <person name="Chao Q."/>
            <person name="Choy N."/>
            <person name="Enju A."/>
            <person name="Goldsmith A.D."/>
            <person name="Gurjal M."/>
            <person name="Hansen N.F."/>
            <person name="Hayashizaki Y."/>
            <person name="Johnson-Hopson C."/>
            <person name="Hsuan V.W."/>
            <person name="Iida K."/>
            <person name="Karnes M."/>
            <person name="Khan S."/>
            <person name="Koesema E."/>
            <person name="Ishida J."/>
            <person name="Jiang P.X."/>
            <person name="Jones T."/>
            <person name="Kawai J."/>
            <person name="Kamiya A."/>
            <person name="Meyers C."/>
            <person name="Nakajima M."/>
            <person name="Narusaka M."/>
            <person name="Seki M."/>
            <person name="Sakurai T."/>
            <person name="Satou M."/>
            <person name="Tamse R."/>
            <person name="Vaysberg M."/>
            <person name="Wallender E.K."/>
            <person name="Wong C."/>
            <person name="Yamamura Y."/>
            <person name="Yuan S."/>
            <person name="Shinozaki K."/>
            <person name="Davis R.W."/>
            <person name="Theologis A."/>
            <person name="Ecker J.R."/>
        </authorList>
    </citation>
    <scope>NUCLEOTIDE SEQUENCE [LARGE SCALE MRNA]</scope>
    <source>
        <strain>cv. Columbia</strain>
    </source>
</reference>
<reference key="4">
    <citation type="submission" date="2004-08" db="EMBL/GenBank/DDBJ databases">
        <title>Arabidopsis ORF clones.</title>
        <authorList>
            <person name="Cheuk R.F."/>
            <person name="Chen H."/>
            <person name="Kim C.J."/>
            <person name="Shinn P."/>
            <person name="Ecker J.R."/>
        </authorList>
    </citation>
    <scope>NUCLEOTIDE SEQUENCE [LARGE SCALE MRNA]</scope>
    <source>
        <strain>cv. Columbia</strain>
    </source>
</reference>
<reference key="5">
    <citation type="journal article" date="2007" name="Plant J.">
        <title>Members of the plant NIMA-related kinases are involved in organ development and vascularization in poplar, Arabidopsis and rice.</title>
        <authorList>
            <person name="Vigneault F."/>
            <person name="Lachance D."/>
            <person name="Cloutier M."/>
            <person name="Pelletier G."/>
            <person name="Levasseur C."/>
            <person name="Seguin A."/>
        </authorList>
    </citation>
    <scope>GENE FAMILY</scope>
    <scope>NOMENCLATURE</scope>
</reference>
<sequence>MEHYEVLEQIGKGSFGSALLVRHKHEKKLYVLKKIRLARQTGRTRRSAHQEMELISKIRNPFIVEYKDSWVEKGCYVCIVIGYCKGGDMAEAIKKANGVEFSEEKLCKWLVQLLMALEYLHASHILHRDVKCSNIFLTKDQDIRLGDFGLAKILTSDDLASSVVGTPSYMCPELLADIPYGSKSDIWSLGCCMYEMTALKPAFKAFDMQGLINRINRSIVAPLPAQYSTAFRSLVKSMLRKNPELRPSASDLLRQPLLQPYVQKVLLKLSFREHDTLPSESERRSSYPQQRKRTSGKSVSFGPSRFGVDQEDSVSSVKPVHTYLHRHRPVDLSANDTSRVVVRRPAVSSVVSNSSKYVPVRSNQPKSGGLLKPAVVTRRASLPISQKPAKGTKDSLYHPNIGILHQLNSPDVSVNSPRIDRIKFPLASYEEMPFIPVVRKKKGSSRGSYSPPPEPPLDCSITKDKFTLEPERETKSDLSDQNATAGASSRASSGASRRQRFDPSSYRQRAEALEGLLEFSARLLIDERYDELNVLLKPFGPGKVSPRETAIWLSKSFKESSPSNLEED</sequence>
<evidence type="ECO:0000255" key="1">
    <source>
        <dbReference type="PROSITE-ProRule" id="PRU00159"/>
    </source>
</evidence>
<evidence type="ECO:0000255" key="2">
    <source>
        <dbReference type="PROSITE-ProRule" id="PRU10027"/>
    </source>
</evidence>
<evidence type="ECO:0000256" key="3">
    <source>
        <dbReference type="SAM" id="MobiDB-lite"/>
    </source>
</evidence>
<evidence type="ECO:0000305" key="4"/>
<name>NEK3_ARATH</name>
<protein>
    <recommendedName>
        <fullName>Serine/threonine-protein kinase Nek3</fullName>
        <ecNumber>2.7.11.1</ecNumber>
    </recommendedName>
    <alternativeName>
        <fullName>NimA-related protein kinase 3</fullName>
        <shortName>AtNek3</shortName>
    </alternativeName>
</protein>
<comment type="function">
    <text>May be involved in plant development processes.</text>
</comment>
<comment type="catalytic activity">
    <reaction>
        <text>L-seryl-[protein] + ATP = O-phospho-L-seryl-[protein] + ADP + H(+)</text>
        <dbReference type="Rhea" id="RHEA:17989"/>
        <dbReference type="Rhea" id="RHEA-COMP:9863"/>
        <dbReference type="Rhea" id="RHEA-COMP:11604"/>
        <dbReference type="ChEBI" id="CHEBI:15378"/>
        <dbReference type="ChEBI" id="CHEBI:29999"/>
        <dbReference type="ChEBI" id="CHEBI:30616"/>
        <dbReference type="ChEBI" id="CHEBI:83421"/>
        <dbReference type="ChEBI" id="CHEBI:456216"/>
        <dbReference type="EC" id="2.7.11.1"/>
    </reaction>
</comment>
<comment type="catalytic activity">
    <reaction>
        <text>L-threonyl-[protein] + ATP = O-phospho-L-threonyl-[protein] + ADP + H(+)</text>
        <dbReference type="Rhea" id="RHEA:46608"/>
        <dbReference type="Rhea" id="RHEA-COMP:11060"/>
        <dbReference type="Rhea" id="RHEA-COMP:11605"/>
        <dbReference type="ChEBI" id="CHEBI:15378"/>
        <dbReference type="ChEBI" id="CHEBI:30013"/>
        <dbReference type="ChEBI" id="CHEBI:30616"/>
        <dbReference type="ChEBI" id="CHEBI:61977"/>
        <dbReference type="ChEBI" id="CHEBI:456216"/>
        <dbReference type="EC" id="2.7.11.1"/>
    </reaction>
</comment>
<comment type="similarity">
    <text evidence="4">Belongs to the protein kinase superfamily. NEK Ser/Thr protein kinase family. NIMA subfamily.</text>
</comment>
<dbReference type="EC" id="2.7.11.1"/>
<dbReference type="EMBL" id="AF296835">
    <property type="status" value="NOT_ANNOTATED_CDS"/>
    <property type="molecule type" value="Genomic_DNA"/>
</dbReference>
<dbReference type="EMBL" id="CP002688">
    <property type="protein sequence ID" value="AED93785.1"/>
    <property type="molecule type" value="Genomic_DNA"/>
</dbReference>
<dbReference type="EMBL" id="CP002688">
    <property type="protein sequence ID" value="ANM68653.1"/>
    <property type="molecule type" value="Genomic_DNA"/>
</dbReference>
<dbReference type="EMBL" id="AY090360">
    <property type="protein sequence ID" value="AAL91264.1"/>
    <property type="molecule type" value="mRNA"/>
</dbReference>
<dbReference type="EMBL" id="BT015415">
    <property type="protein sequence ID" value="AAU05538.1"/>
    <property type="molecule type" value="mRNA"/>
</dbReference>
<dbReference type="RefSeq" id="NP_001330383.1">
    <property type="nucleotide sequence ID" value="NM_001344066.1"/>
</dbReference>
<dbReference type="RefSeq" id="NP_198181.1">
    <property type="nucleotide sequence ID" value="NM_122712.3"/>
</dbReference>
<dbReference type="SMR" id="Q8RX66"/>
<dbReference type="BioGRID" id="18185">
    <property type="interactions" value="3"/>
</dbReference>
<dbReference type="FunCoup" id="Q8RX66">
    <property type="interactions" value="1838"/>
</dbReference>
<dbReference type="IntAct" id="Q8RX66">
    <property type="interactions" value="3"/>
</dbReference>
<dbReference type="STRING" id="3702.Q8RX66"/>
<dbReference type="iPTMnet" id="Q8RX66"/>
<dbReference type="PaxDb" id="3702-AT5G28290.1"/>
<dbReference type="ProteomicsDB" id="238355"/>
<dbReference type="EnsemblPlants" id="AT5G28290.1">
    <property type="protein sequence ID" value="AT5G28290.1"/>
    <property type="gene ID" value="AT5G28290"/>
</dbReference>
<dbReference type="EnsemblPlants" id="AT5G28290.2">
    <property type="protein sequence ID" value="AT5G28290.2"/>
    <property type="gene ID" value="AT5G28290"/>
</dbReference>
<dbReference type="GeneID" id="832912"/>
<dbReference type="Gramene" id="AT5G28290.1">
    <property type="protein sequence ID" value="AT5G28290.1"/>
    <property type="gene ID" value="AT5G28290"/>
</dbReference>
<dbReference type="Gramene" id="AT5G28290.2">
    <property type="protein sequence ID" value="AT5G28290.2"/>
    <property type="gene ID" value="AT5G28290"/>
</dbReference>
<dbReference type="KEGG" id="ath:AT5G28290"/>
<dbReference type="Araport" id="AT5G28290"/>
<dbReference type="TAIR" id="AT5G28290">
    <property type="gene designation" value="NEK3"/>
</dbReference>
<dbReference type="eggNOG" id="KOG0589">
    <property type="taxonomic scope" value="Eukaryota"/>
</dbReference>
<dbReference type="HOGENOM" id="CLU_000288_128_3_1"/>
<dbReference type="InParanoid" id="Q8RX66"/>
<dbReference type="PhylomeDB" id="Q8RX66"/>
<dbReference type="PRO" id="PR:Q8RX66"/>
<dbReference type="Proteomes" id="UP000006548">
    <property type="component" value="Chromosome 5"/>
</dbReference>
<dbReference type="ExpressionAtlas" id="Q8RX66">
    <property type="expression patterns" value="baseline and differential"/>
</dbReference>
<dbReference type="GO" id="GO:0005524">
    <property type="term" value="F:ATP binding"/>
    <property type="evidence" value="ECO:0007669"/>
    <property type="project" value="UniProtKB-KW"/>
</dbReference>
<dbReference type="GO" id="GO:0106310">
    <property type="term" value="F:protein serine kinase activity"/>
    <property type="evidence" value="ECO:0007669"/>
    <property type="project" value="RHEA"/>
</dbReference>
<dbReference type="GO" id="GO:0004674">
    <property type="term" value="F:protein serine/threonine kinase activity"/>
    <property type="evidence" value="ECO:0007669"/>
    <property type="project" value="UniProtKB-KW"/>
</dbReference>
<dbReference type="CDD" id="cd08215">
    <property type="entry name" value="STKc_Nek"/>
    <property type="match status" value="1"/>
</dbReference>
<dbReference type="FunFam" id="3.30.200.20:FF:000108">
    <property type="entry name" value="Serine/threonine-protein kinase Nek2"/>
    <property type="match status" value="1"/>
</dbReference>
<dbReference type="FunFam" id="1.10.510.10:FF:000788">
    <property type="entry name" value="Serine/threonine-protein kinase Nek3"/>
    <property type="match status" value="1"/>
</dbReference>
<dbReference type="Gene3D" id="3.30.200.20">
    <property type="entry name" value="Phosphorylase Kinase, domain 1"/>
    <property type="match status" value="1"/>
</dbReference>
<dbReference type="Gene3D" id="1.10.510.10">
    <property type="entry name" value="Transferase(Phosphotransferase) domain 1"/>
    <property type="match status" value="1"/>
</dbReference>
<dbReference type="InterPro" id="IPR011009">
    <property type="entry name" value="Kinase-like_dom_sf"/>
</dbReference>
<dbReference type="InterPro" id="IPR050660">
    <property type="entry name" value="NEK_Ser/Thr_kinase"/>
</dbReference>
<dbReference type="InterPro" id="IPR000719">
    <property type="entry name" value="Prot_kinase_dom"/>
</dbReference>
<dbReference type="InterPro" id="IPR017441">
    <property type="entry name" value="Protein_kinase_ATP_BS"/>
</dbReference>
<dbReference type="InterPro" id="IPR008271">
    <property type="entry name" value="Ser/Thr_kinase_AS"/>
</dbReference>
<dbReference type="PANTHER" id="PTHR43671">
    <property type="entry name" value="SERINE/THREONINE-PROTEIN KINASE NEK"/>
    <property type="match status" value="1"/>
</dbReference>
<dbReference type="PANTHER" id="PTHR43671:SF45">
    <property type="entry name" value="SERINE_THREONINE-PROTEIN KINASE NEK1-RELATED"/>
    <property type="match status" value="1"/>
</dbReference>
<dbReference type="Pfam" id="PF00069">
    <property type="entry name" value="Pkinase"/>
    <property type="match status" value="1"/>
</dbReference>
<dbReference type="SMART" id="SM00220">
    <property type="entry name" value="S_TKc"/>
    <property type="match status" value="1"/>
</dbReference>
<dbReference type="SUPFAM" id="SSF56112">
    <property type="entry name" value="Protein kinase-like (PK-like)"/>
    <property type="match status" value="1"/>
</dbReference>
<dbReference type="PROSITE" id="PS00107">
    <property type="entry name" value="PROTEIN_KINASE_ATP"/>
    <property type="match status" value="1"/>
</dbReference>
<dbReference type="PROSITE" id="PS50011">
    <property type="entry name" value="PROTEIN_KINASE_DOM"/>
    <property type="match status" value="1"/>
</dbReference>
<dbReference type="PROSITE" id="PS00108">
    <property type="entry name" value="PROTEIN_KINASE_ST"/>
    <property type="match status" value="1"/>
</dbReference>
<proteinExistence type="evidence at transcript level"/>